<comment type="function">
    <text evidence="1">Bidirectionally degrades single-stranded DNA into large acid-insoluble oligonucleotides, which are then degraded further into small acid-soluble oligonucleotides.</text>
</comment>
<comment type="catalytic activity">
    <reaction evidence="1">
        <text>Exonucleolytic cleavage in either 5'- to 3'- or 3'- to 5'-direction to yield nucleoside 5'-phosphates.</text>
        <dbReference type="EC" id="3.1.11.6"/>
    </reaction>
</comment>
<comment type="subunit">
    <text evidence="1">Heterooligomer composed of large and small subunits.</text>
</comment>
<comment type="subcellular location">
    <subcellularLocation>
        <location evidence="1">Cytoplasm</location>
    </subcellularLocation>
</comment>
<comment type="similarity">
    <text evidence="1">Belongs to the XseB family.</text>
</comment>
<evidence type="ECO:0000255" key="1">
    <source>
        <dbReference type="HAMAP-Rule" id="MF_00337"/>
    </source>
</evidence>
<reference key="1">
    <citation type="submission" date="2008-05" db="EMBL/GenBank/DDBJ databases">
        <title>Complete sequence of chromosome of Geobacter lovleyi SZ.</title>
        <authorList>
            <consortium name="US DOE Joint Genome Institute"/>
            <person name="Lucas S."/>
            <person name="Copeland A."/>
            <person name="Lapidus A."/>
            <person name="Glavina del Rio T."/>
            <person name="Dalin E."/>
            <person name="Tice H."/>
            <person name="Bruce D."/>
            <person name="Goodwin L."/>
            <person name="Pitluck S."/>
            <person name="Chertkov O."/>
            <person name="Meincke L."/>
            <person name="Brettin T."/>
            <person name="Detter J.C."/>
            <person name="Han C."/>
            <person name="Tapia R."/>
            <person name="Kuske C.R."/>
            <person name="Schmutz J."/>
            <person name="Larimer F."/>
            <person name="Land M."/>
            <person name="Hauser L."/>
            <person name="Kyrpides N."/>
            <person name="Mikhailova N."/>
            <person name="Sung Y."/>
            <person name="Fletcher K.E."/>
            <person name="Ritalahti K.M."/>
            <person name="Loeffler F.E."/>
            <person name="Richardson P."/>
        </authorList>
    </citation>
    <scope>NUCLEOTIDE SEQUENCE [LARGE SCALE GENOMIC DNA]</scope>
    <source>
        <strain>ATCC BAA-1151 / DSM 17278 / SZ</strain>
    </source>
</reference>
<sequence length="77" mass="8704">MAAEKFETSLKKLEEVVRKLEGGSLSLDDSIKAFEEGVKHAAFCAKKLDEAERKVEVLIKQRDGSFRKEPFTTDNDD</sequence>
<dbReference type="EC" id="3.1.11.6" evidence="1"/>
<dbReference type="EMBL" id="CP001089">
    <property type="protein sequence ID" value="ACD95900.1"/>
    <property type="molecule type" value="Genomic_DNA"/>
</dbReference>
<dbReference type="RefSeq" id="WP_012470236.1">
    <property type="nucleotide sequence ID" value="NC_010814.1"/>
</dbReference>
<dbReference type="SMR" id="B3E479"/>
<dbReference type="STRING" id="398767.Glov_2184"/>
<dbReference type="KEGG" id="glo:Glov_2184"/>
<dbReference type="eggNOG" id="COG1722">
    <property type="taxonomic scope" value="Bacteria"/>
</dbReference>
<dbReference type="HOGENOM" id="CLU_145918_3_3_7"/>
<dbReference type="OrthoDB" id="5523157at2"/>
<dbReference type="Proteomes" id="UP000002420">
    <property type="component" value="Chromosome"/>
</dbReference>
<dbReference type="GO" id="GO:0005829">
    <property type="term" value="C:cytosol"/>
    <property type="evidence" value="ECO:0007669"/>
    <property type="project" value="TreeGrafter"/>
</dbReference>
<dbReference type="GO" id="GO:0009318">
    <property type="term" value="C:exodeoxyribonuclease VII complex"/>
    <property type="evidence" value="ECO:0007669"/>
    <property type="project" value="InterPro"/>
</dbReference>
<dbReference type="GO" id="GO:0008855">
    <property type="term" value="F:exodeoxyribonuclease VII activity"/>
    <property type="evidence" value="ECO:0007669"/>
    <property type="project" value="UniProtKB-UniRule"/>
</dbReference>
<dbReference type="GO" id="GO:0006308">
    <property type="term" value="P:DNA catabolic process"/>
    <property type="evidence" value="ECO:0007669"/>
    <property type="project" value="UniProtKB-UniRule"/>
</dbReference>
<dbReference type="Gene3D" id="1.10.287.1040">
    <property type="entry name" value="Exonuclease VII, small subunit"/>
    <property type="match status" value="1"/>
</dbReference>
<dbReference type="HAMAP" id="MF_00337">
    <property type="entry name" value="Exonuc_7_S"/>
    <property type="match status" value="1"/>
</dbReference>
<dbReference type="InterPro" id="IPR003761">
    <property type="entry name" value="Exonuc_VII_S"/>
</dbReference>
<dbReference type="InterPro" id="IPR037004">
    <property type="entry name" value="Exonuc_VII_ssu_sf"/>
</dbReference>
<dbReference type="NCBIfam" id="NF002140">
    <property type="entry name" value="PRK00977.1-4"/>
    <property type="match status" value="1"/>
</dbReference>
<dbReference type="NCBIfam" id="NF010669">
    <property type="entry name" value="PRK14066.1"/>
    <property type="match status" value="1"/>
</dbReference>
<dbReference type="NCBIfam" id="TIGR01280">
    <property type="entry name" value="xseB"/>
    <property type="match status" value="1"/>
</dbReference>
<dbReference type="PANTHER" id="PTHR34137">
    <property type="entry name" value="EXODEOXYRIBONUCLEASE 7 SMALL SUBUNIT"/>
    <property type="match status" value="1"/>
</dbReference>
<dbReference type="PANTHER" id="PTHR34137:SF1">
    <property type="entry name" value="EXODEOXYRIBONUCLEASE 7 SMALL SUBUNIT"/>
    <property type="match status" value="1"/>
</dbReference>
<dbReference type="Pfam" id="PF02609">
    <property type="entry name" value="Exonuc_VII_S"/>
    <property type="match status" value="1"/>
</dbReference>
<dbReference type="PIRSF" id="PIRSF006488">
    <property type="entry name" value="Exonuc_VII_S"/>
    <property type="match status" value="1"/>
</dbReference>
<dbReference type="SUPFAM" id="SSF116842">
    <property type="entry name" value="XseB-like"/>
    <property type="match status" value="1"/>
</dbReference>
<accession>B3E479</accession>
<name>EX7S_TRIL1</name>
<protein>
    <recommendedName>
        <fullName evidence="1">Exodeoxyribonuclease 7 small subunit</fullName>
        <ecNumber evidence="1">3.1.11.6</ecNumber>
    </recommendedName>
    <alternativeName>
        <fullName evidence="1">Exodeoxyribonuclease VII small subunit</fullName>
        <shortName evidence="1">Exonuclease VII small subunit</shortName>
    </alternativeName>
</protein>
<keyword id="KW-0963">Cytoplasm</keyword>
<keyword id="KW-0269">Exonuclease</keyword>
<keyword id="KW-0378">Hydrolase</keyword>
<keyword id="KW-0540">Nuclease</keyword>
<keyword id="KW-1185">Reference proteome</keyword>
<organism>
    <name type="scientific">Trichlorobacter lovleyi (strain ATCC BAA-1151 / DSM 17278 / SZ)</name>
    <name type="common">Geobacter lovleyi</name>
    <dbReference type="NCBI Taxonomy" id="398767"/>
    <lineage>
        <taxon>Bacteria</taxon>
        <taxon>Pseudomonadati</taxon>
        <taxon>Thermodesulfobacteriota</taxon>
        <taxon>Desulfuromonadia</taxon>
        <taxon>Geobacterales</taxon>
        <taxon>Geobacteraceae</taxon>
        <taxon>Trichlorobacter</taxon>
    </lineage>
</organism>
<proteinExistence type="inferred from homology"/>
<gene>
    <name evidence="1" type="primary">xseB</name>
    <name type="ordered locus">Glov_2184</name>
</gene>
<feature type="chain" id="PRO_1000119931" description="Exodeoxyribonuclease 7 small subunit">
    <location>
        <begin position="1"/>
        <end position="77"/>
    </location>
</feature>